<proteinExistence type="inferred from homology"/>
<comment type="function">
    <text evidence="2">GTP hydrolase that promotes the GTP-dependent binding of aminoacyl-tRNA to the A-site of ribosomes during protein biosynthesis.</text>
</comment>
<comment type="catalytic activity">
    <reaction evidence="2">
        <text>GTP + H2O = GDP + phosphate + H(+)</text>
        <dbReference type="Rhea" id="RHEA:19669"/>
        <dbReference type="ChEBI" id="CHEBI:15377"/>
        <dbReference type="ChEBI" id="CHEBI:15378"/>
        <dbReference type="ChEBI" id="CHEBI:37565"/>
        <dbReference type="ChEBI" id="CHEBI:43474"/>
        <dbReference type="ChEBI" id="CHEBI:58189"/>
        <dbReference type="EC" id="3.6.5.3"/>
    </reaction>
    <physiologicalReaction direction="left-to-right" evidence="2">
        <dbReference type="Rhea" id="RHEA:19670"/>
    </physiologicalReaction>
</comment>
<comment type="subunit">
    <text evidence="2">Monomer.</text>
</comment>
<comment type="subcellular location">
    <subcellularLocation>
        <location evidence="2">Cytoplasm</location>
    </subcellularLocation>
</comment>
<comment type="similarity">
    <text evidence="2">Belongs to the TRAFAC class translation factor GTPase superfamily. Classic translation factor GTPase family. EF-Tu/EF-1A subfamily.</text>
</comment>
<keyword id="KW-0963">Cytoplasm</keyword>
<keyword id="KW-0251">Elongation factor</keyword>
<keyword id="KW-0342">GTP-binding</keyword>
<keyword id="KW-0378">Hydrolase</keyword>
<keyword id="KW-0460">Magnesium</keyword>
<keyword id="KW-0479">Metal-binding</keyword>
<keyword id="KW-0547">Nucleotide-binding</keyword>
<keyword id="KW-0648">Protein biosynthesis</keyword>
<feature type="chain" id="PRO_0000337368" description="Elongation factor Tu">
    <location>
        <begin position="1"/>
        <end position="397"/>
    </location>
</feature>
<feature type="domain" description="tr-type G">
    <location>
        <begin position="10"/>
        <end position="206"/>
    </location>
</feature>
<feature type="region of interest" description="G1" evidence="1">
    <location>
        <begin position="19"/>
        <end position="26"/>
    </location>
</feature>
<feature type="region of interest" description="G2" evidence="1">
    <location>
        <begin position="60"/>
        <end position="64"/>
    </location>
</feature>
<feature type="region of interest" description="G3" evidence="1">
    <location>
        <begin position="81"/>
        <end position="84"/>
    </location>
</feature>
<feature type="region of interest" description="G4" evidence="1">
    <location>
        <begin position="136"/>
        <end position="139"/>
    </location>
</feature>
<feature type="region of interest" description="G5" evidence="1">
    <location>
        <begin position="174"/>
        <end position="176"/>
    </location>
</feature>
<feature type="binding site" evidence="2">
    <location>
        <begin position="19"/>
        <end position="26"/>
    </location>
    <ligand>
        <name>GTP</name>
        <dbReference type="ChEBI" id="CHEBI:37565"/>
    </ligand>
</feature>
<feature type="binding site" evidence="2">
    <location>
        <position position="26"/>
    </location>
    <ligand>
        <name>Mg(2+)</name>
        <dbReference type="ChEBI" id="CHEBI:18420"/>
    </ligand>
</feature>
<feature type="binding site" evidence="2">
    <location>
        <begin position="81"/>
        <end position="85"/>
    </location>
    <ligand>
        <name>GTP</name>
        <dbReference type="ChEBI" id="CHEBI:37565"/>
    </ligand>
</feature>
<feature type="binding site" evidence="2">
    <location>
        <begin position="136"/>
        <end position="139"/>
    </location>
    <ligand>
        <name>GTP</name>
        <dbReference type="ChEBI" id="CHEBI:37565"/>
    </ligand>
</feature>
<evidence type="ECO:0000250" key="1"/>
<evidence type="ECO:0000255" key="2">
    <source>
        <dbReference type="HAMAP-Rule" id="MF_00118"/>
    </source>
</evidence>
<reference key="1">
    <citation type="submission" date="2007-11" db="EMBL/GenBank/DDBJ databases">
        <title>Genome sequencing of phylogenetically and phenotypically diverse Coxiella burnetii isolates.</title>
        <authorList>
            <person name="Seshadri R."/>
            <person name="Samuel J.E."/>
        </authorList>
    </citation>
    <scope>NUCLEOTIDE SEQUENCE [LARGE SCALE GENOMIC DNA]</scope>
    <source>
        <strain>RSA 331 / Henzerling II</strain>
    </source>
</reference>
<name>EFTU_COXBR</name>
<dbReference type="EC" id="3.6.5.3" evidence="2"/>
<dbReference type="EMBL" id="CP000890">
    <property type="protein sequence ID" value="ABX77236.1"/>
    <property type="molecule type" value="Genomic_DNA"/>
</dbReference>
<dbReference type="EMBL" id="CP000890">
    <property type="protein sequence ID" value="ABX77402.1"/>
    <property type="molecule type" value="Genomic_DNA"/>
</dbReference>
<dbReference type="SMR" id="A9NAK7"/>
<dbReference type="KEGG" id="cbs:COXBURSA331_A0319"/>
<dbReference type="KEGG" id="cbs:COXBURSA331_A0335"/>
<dbReference type="HOGENOM" id="CLU_007265_0_1_6"/>
<dbReference type="GO" id="GO:0005829">
    <property type="term" value="C:cytosol"/>
    <property type="evidence" value="ECO:0007669"/>
    <property type="project" value="TreeGrafter"/>
</dbReference>
<dbReference type="GO" id="GO:0005525">
    <property type="term" value="F:GTP binding"/>
    <property type="evidence" value="ECO:0007669"/>
    <property type="project" value="UniProtKB-UniRule"/>
</dbReference>
<dbReference type="GO" id="GO:0003924">
    <property type="term" value="F:GTPase activity"/>
    <property type="evidence" value="ECO:0007669"/>
    <property type="project" value="InterPro"/>
</dbReference>
<dbReference type="GO" id="GO:0097216">
    <property type="term" value="F:guanosine tetraphosphate binding"/>
    <property type="evidence" value="ECO:0007669"/>
    <property type="project" value="UniProtKB-ARBA"/>
</dbReference>
<dbReference type="GO" id="GO:0003746">
    <property type="term" value="F:translation elongation factor activity"/>
    <property type="evidence" value="ECO:0007669"/>
    <property type="project" value="UniProtKB-UniRule"/>
</dbReference>
<dbReference type="CDD" id="cd01884">
    <property type="entry name" value="EF_Tu"/>
    <property type="match status" value="1"/>
</dbReference>
<dbReference type="CDD" id="cd03697">
    <property type="entry name" value="EFTU_II"/>
    <property type="match status" value="1"/>
</dbReference>
<dbReference type="CDD" id="cd03707">
    <property type="entry name" value="EFTU_III"/>
    <property type="match status" value="1"/>
</dbReference>
<dbReference type="FunFam" id="2.40.30.10:FF:000001">
    <property type="entry name" value="Elongation factor Tu"/>
    <property type="match status" value="1"/>
</dbReference>
<dbReference type="FunFam" id="3.40.50.300:FF:000003">
    <property type="entry name" value="Elongation factor Tu"/>
    <property type="match status" value="1"/>
</dbReference>
<dbReference type="Gene3D" id="3.40.50.300">
    <property type="entry name" value="P-loop containing nucleotide triphosphate hydrolases"/>
    <property type="match status" value="1"/>
</dbReference>
<dbReference type="Gene3D" id="2.40.30.10">
    <property type="entry name" value="Translation factors"/>
    <property type="match status" value="2"/>
</dbReference>
<dbReference type="HAMAP" id="MF_00118_B">
    <property type="entry name" value="EF_Tu_B"/>
    <property type="match status" value="1"/>
</dbReference>
<dbReference type="InterPro" id="IPR041709">
    <property type="entry name" value="EF-Tu_GTP-bd"/>
</dbReference>
<dbReference type="InterPro" id="IPR050055">
    <property type="entry name" value="EF-Tu_GTPase"/>
</dbReference>
<dbReference type="InterPro" id="IPR004161">
    <property type="entry name" value="EFTu-like_2"/>
</dbReference>
<dbReference type="InterPro" id="IPR033720">
    <property type="entry name" value="EFTU_2"/>
</dbReference>
<dbReference type="InterPro" id="IPR031157">
    <property type="entry name" value="G_TR_CS"/>
</dbReference>
<dbReference type="InterPro" id="IPR027417">
    <property type="entry name" value="P-loop_NTPase"/>
</dbReference>
<dbReference type="InterPro" id="IPR005225">
    <property type="entry name" value="Small_GTP-bd"/>
</dbReference>
<dbReference type="InterPro" id="IPR000795">
    <property type="entry name" value="T_Tr_GTP-bd_dom"/>
</dbReference>
<dbReference type="InterPro" id="IPR009000">
    <property type="entry name" value="Transl_B-barrel_sf"/>
</dbReference>
<dbReference type="InterPro" id="IPR009001">
    <property type="entry name" value="Transl_elong_EF1A/Init_IF2_C"/>
</dbReference>
<dbReference type="InterPro" id="IPR004541">
    <property type="entry name" value="Transl_elong_EFTu/EF1A_bac/org"/>
</dbReference>
<dbReference type="InterPro" id="IPR004160">
    <property type="entry name" value="Transl_elong_EFTu/EF1A_C"/>
</dbReference>
<dbReference type="NCBIfam" id="TIGR00485">
    <property type="entry name" value="EF-Tu"/>
    <property type="match status" value="1"/>
</dbReference>
<dbReference type="NCBIfam" id="NF000766">
    <property type="entry name" value="PRK00049.1"/>
    <property type="match status" value="1"/>
</dbReference>
<dbReference type="NCBIfam" id="NF009372">
    <property type="entry name" value="PRK12735.1"/>
    <property type="match status" value="1"/>
</dbReference>
<dbReference type="NCBIfam" id="NF009373">
    <property type="entry name" value="PRK12736.1"/>
    <property type="match status" value="1"/>
</dbReference>
<dbReference type="NCBIfam" id="TIGR00231">
    <property type="entry name" value="small_GTP"/>
    <property type="match status" value="1"/>
</dbReference>
<dbReference type="PANTHER" id="PTHR43721:SF22">
    <property type="entry name" value="ELONGATION FACTOR TU, MITOCHONDRIAL"/>
    <property type="match status" value="1"/>
</dbReference>
<dbReference type="PANTHER" id="PTHR43721">
    <property type="entry name" value="ELONGATION FACTOR TU-RELATED"/>
    <property type="match status" value="1"/>
</dbReference>
<dbReference type="Pfam" id="PF00009">
    <property type="entry name" value="GTP_EFTU"/>
    <property type="match status" value="1"/>
</dbReference>
<dbReference type="Pfam" id="PF03144">
    <property type="entry name" value="GTP_EFTU_D2"/>
    <property type="match status" value="1"/>
</dbReference>
<dbReference type="Pfam" id="PF03143">
    <property type="entry name" value="GTP_EFTU_D3"/>
    <property type="match status" value="1"/>
</dbReference>
<dbReference type="PRINTS" id="PR00315">
    <property type="entry name" value="ELONGATNFCT"/>
</dbReference>
<dbReference type="SUPFAM" id="SSF50465">
    <property type="entry name" value="EF-Tu/eEF-1alpha/eIF2-gamma C-terminal domain"/>
    <property type="match status" value="1"/>
</dbReference>
<dbReference type="SUPFAM" id="SSF52540">
    <property type="entry name" value="P-loop containing nucleoside triphosphate hydrolases"/>
    <property type="match status" value="1"/>
</dbReference>
<dbReference type="SUPFAM" id="SSF50447">
    <property type="entry name" value="Translation proteins"/>
    <property type="match status" value="1"/>
</dbReference>
<dbReference type="PROSITE" id="PS00301">
    <property type="entry name" value="G_TR_1"/>
    <property type="match status" value="1"/>
</dbReference>
<dbReference type="PROSITE" id="PS51722">
    <property type="entry name" value="G_TR_2"/>
    <property type="match status" value="1"/>
</dbReference>
<gene>
    <name evidence="2" type="primary">tuf1</name>
    <name type="ordered locus">COXBURSA331_A0319</name>
</gene>
<gene>
    <name evidence="2" type="primary">tuf2</name>
    <name type="ordered locus">COXBURSA331_A0335</name>
</gene>
<organism>
    <name type="scientific">Coxiella burnetii (strain RSA 331 / Henzerling II)</name>
    <dbReference type="NCBI Taxonomy" id="360115"/>
    <lineage>
        <taxon>Bacteria</taxon>
        <taxon>Pseudomonadati</taxon>
        <taxon>Pseudomonadota</taxon>
        <taxon>Gammaproteobacteria</taxon>
        <taxon>Legionellales</taxon>
        <taxon>Coxiellaceae</taxon>
        <taxon>Coxiella</taxon>
    </lineage>
</organism>
<sequence>MSKEKFVREKPHVNVGTIGHVDHGKTTLTAALTKVLSEKYGGEKKAFDQIDNAPEERARGITIATSHVEYQSDKRHYAHVDCPGHADYVKNMITGAAQMDGAILVVSAADGPMPQTREHIVLAKQVGVPNIVVYLNKADMVDDKELLELVEMEVRDLLNSYDFPGDETPIIVGSALKALEGDKSEVGEPSIIKLVETMDTYFPQPERAIDKPFLMPIEDVFSISGRGTVVTGRVERGIIKVGDEIEIVGIKDTTKTTCTGVEMFRKLLDEGQAGDNVGILLRGTKREEVERGQVLAKPGSITPHKKFEAEIYVLSKEEGGRHTPFLQGYRPQFYFRTTDVTGQLLSLPEGIEMVMPGDNVKVTVELIAPVAMDEGLRFAVREGGRTVGAGVVTKIIE</sequence>
<accession>A9NAK7</accession>
<protein>
    <recommendedName>
        <fullName evidence="2">Elongation factor Tu</fullName>
        <shortName evidence="2">EF-Tu</shortName>
        <ecNumber evidence="2">3.6.5.3</ecNumber>
    </recommendedName>
</protein>